<comment type="catalytic activity">
    <reaction evidence="1">
        <text>(2R)-O-phospho-3-sulfolactate + H2O = (2R)-3-sulfolactate + phosphate</text>
        <dbReference type="Rhea" id="RHEA:23416"/>
        <dbReference type="ChEBI" id="CHEBI:15377"/>
        <dbReference type="ChEBI" id="CHEBI:15597"/>
        <dbReference type="ChEBI" id="CHEBI:43474"/>
        <dbReference type="ChEBI" id="CHEBI:58738"/>
        <dbReference type="EC" id="3.1.3.71"/>
    </reaction>
</comment>
<comment type="cofactor">
    <cofactor evidence="1">
        <name>Mg(2+)</name>
        <dbReference type="ChEBI" id="CHEBI:18420"/>
    </cofactor>
</comment>
<comment type="similarity">
    <text evidence="1">Belongs to the ComB family.</text>
</comment>
<gene>
    <name evidence="1" type="primary">comB</name>
    <name type="ordered locus">gll2974</name>
</gene>
<sequence length="236" mass="24811">MQVSVFHTPELVPEGTPDCAVAVDVLRATSTIATALANGATAVQVYADLEALGAAAAGYPREDILRGGERGGKQVEGFDFGNSPLYCTSERVAGKRIFMSTTNGTRTLERIRHAPVVLTAALVNVGFVARYIRSQAFETVWVVGSGWQGNFSLEDTVCAGALVEQLGGAANDEAVAAAALFDTWEGDLIELLERASHGQRLLKLGLLDDIVYCAALDTVSALPRQTAAGVLVQGMA</sequence>
<evidence type="ECO:0000255" key="1">
    <source>
        <dbReference type="HAMAP-Rule" id="MF_00490"/>
    </source>
</evidence>
<proteinExistence type="inferred from homology"/>
<reference key="1">
    <citation type="journal article" date="2003" name="DNA Res.">
        <title>Complete genome structure of Gloeobacter violaceus PCC 7421, a cyanobacterium that lacks thylakoids.</title>
        <authorList>
            <person name="Nakamura Y."/>
            <person name="Kaneko T."/>
            <person name="Sato S."/>
            <person name="Mimuro M."/>
            <person name="Miyashita H."/>
            <person name="Tsuchiya T."/>
            <person name="Sasamoto S."/>
            <person name="Watanabe A."/>
            <person name="Kawashima K."/>
            <person name="Kishida Y."/>
            <person name="Kiyokawa C."/>
            <person name="Kohara M."/>
            <person name="Matsumoto M."/>
            <person name="Matsuno A."/>
            <person name="Nakazaki N."/>
            <person name="Shimpo S."/>
            <person name="Takeuchi C."/>
            <person name="Yamada M."/>
            <person name="Tabata S."/>
        </authorList>
    </citation>
    <scope>NUCLEOTIDE SEQUENCE [LARGE SCALE GENOMIC DNA]</scope>
    <source>
        <strain>ATCC 29082 / PCC 7421</strain>
    </source>
</reference>
<feature type="chain" id="PRO_0000081469" description="Probable 2-phosphosulfolactate phosphatase">
    <location>
        <begin position="1"/>
        <end position="236"/>
    </location>
</feature>
<accession>Q7NCK4</accession>
<name>COMB_GLOVI</name>
<organism>
    <name type="scientific">Gloeobacter violaceus (strain ATCC 29082 / PCC 7421)</name>
    <dbReference type="NCBI Taxonomy" id="251221"/>
    <lineage>
        <taxon>Bacteria</taxon>
        <taxon>Bacillati</taxon>
        <taxon>Cyanobacteriota</taxon>
        <taxon>Cyanophyceae</taxon>
        <taxon>Gloeobacterales</taxon>
        <taxon>Gloeobacteraceae</taxon>
        <taxon>Gloeobacter</taxon>
    </lineage>
</organism>
<protein>
    <recommendedName>
        <fullName evidence="1">Probable 2-phosphosulfolactate phosphatase</fullName>
        <ecNumber evidence="1">3.1.3.71</ecNumber>
    </recommendedName>
</protein>
<keyword id="KW-0378">Hydrolase</keyword>
<keyword id="KW-0460">Magnesium</keyword>
<keyword id="KW-1185">Reference proteome</keyword>
<dbReference type="EC" id="3.1.3.71" evidence="1"/>
<dbReference type="EMBL" id="BA000045">
    <property type="protein sequence ID" value="BAC90915.1"/>
    <property type="molecule type" value="Genomic_DNA"/>
</dbReference>
<dbReference type="RefSeq" id="NP_925920.1">
    <property type="nucleotide sequence ID" value="NC_005125.1"/>
</dbReference>
<dbReference type="RefSeq" id="WP_011142968.1">
    <property type="nucleotide sequence ID" value="NC_005125.1"/>
</dbReference>
<dbReference type="SMR" id="Q7NCK4"/>
<dbReference type="STRING" id="251221.gene:10760478"/>
<dbReference type="EnsemblBacteria" id="BAC90915">
    <property type="protein sequence ID" value="BAC90915"/>
    <property type="gene ID" value="BAC90915"/>
</dbReference>
<dbReference type="KEGG" id="gvi:gll2974"/>
<dbReference type="eggNOG" id="COG2045">
    <property type="taxonomic scope" value="Bacteria"/>
</dbReference>
<dbReference type="HOGENOM" id="CLU_070028_0_1_3"/>
<dbReference type="InParanoid" id="Q7NCK4"/>
<dbReference type="OrthoDB" id="4913at2"/>
<dbReference type="PhylomeDB" id="Q7NCK4"/>
<dbReference type="Proteomes" id="UP000000557">
    <property type="component" value="Chromosome"/>
</dbReference>
<dbReference type="GO" id="GO:0050532">
    <property type="term" value="F:2-phosphosulfolactate phosphatase activity"/>
    <property type="evidence" value="ECO:0007669"/>
    <property type="project" value="UniProtKB-UniRule"/>
</dbReference>
<dbReference type="GO" id="GO:0000287">
    <property type="term" value="F:magnesium ion binding"/>
    <property type="evidence" value="ECO:0007669"/>
    <property type="project" value="UniProtKB-UniRule"/>
</dbReference>
<dbReference type="GO" id="GO:0050545">
    <property type="term" value="F:sulfopyruvate decarboxylase activity"/>
    <property type="evidence" value="ECO:0000318"/>
    <property type="project" value="GO_Central"/>
</dbReference>
<dbReference type="FunFam" id="3.90.1560.10:FF:000001">
    <property type="entry name" value="Probable 2-phosphosulfolactate phosphatase"/>
    <property type="match status" value="1"/>
</dbReference>
<dbReference type="Gene3D" id="3.90.1560.10">
    <property type="entry name" value="ComB-like"/>
    <property type="match status" value="1"/>
</dbReference>
<dbReference type="HAMAP" id="MF_00490">
    <property type="entry name" value="ComB"/>
    <property type="match status" value="1"/>
</dbReference>
<dbReference type="InterPro" id="IPR005238">
    <property type="entry name" value="ComB-like"/>
</dbReference>
<dbReference type="InterPro" id="IPR036702">
    <property type="entry name" value="ComB-like_sf"/>
</dbReference>
<dbReference type="NCBIfam" id="NF002056">
    <property type="entry name" value="PRK00886.1-5"/>
    <property type="match status" value="1"/>
</dbReference>
<dbReference type="PANTHER" id="PTHR37311">
    <property type="entry name" value="2-PHOSPHOSULFOLACTATE PHOSPHATASE-RELATED"/>
    <property type="match status" value="1"/>
</dbReference>
<dbReference type="PANTHER" id="PTHR37311:SF1">
    <property type="entry name" value="2-PHOSPHOSULFOLACTATE PHOSPHATASE-RELATED"/>
    <property type="match status" value="1"/>
</dbReference>
<dbReference type="Pfam" id="PF04029">
    <property type="entry name" value="2-ph_phosp"/>
    <property type="match status" value="1"/>
</dbReference>
<dbReference type="SUPFAM" id="SSF142823">
    <property type="entry name" value="ComB-like"/>
    <property type="match status" value="1"/>
</dbReference>